<comment type="function">
    <text evidence="1">Catalyzes the GTP-dependent ribosomal translocation step during translation elongation. During this step, the ribosome changes from the pre-translocational (PRE) to the post-translocational (POST) state as the newly formed A-site-bound peptidyl-tRNA and P-site-bound deacylated tRNA move to the P and E sites, respectively. Catalyzes the coordinated movement of the two tRNA molecules, the mRNA and conformational changes in the ribosome.</text>
</comment>
<comment type="subcellular location">
    <subcellularLocation>
        <location evidence="1">Cytoplasm</location>
    </subcellularLocation>
</comment>
<comment type="similarity">
    <text evidence="1">Belongs to the TRAFAC class translation factor GTPase superfamily. Classic translation factor GTPase family. EF-G/EF-2 subfamily.</text>
</comment>
<name>EFG_MYCS5</name>
<gene>
    <name evidence="1" type="primary">fusA</name>
    <name type="ordered locus">MS53_0047</name>
</gene>
<dbReference type="EMBL" id="AE017245">
    <property type="protein sequence ID" value="AAZ43468.1"/>
    <property type="molecule type" value="Genomic_DNA"/>
</dbReference>
<dbReference type="RefSeq" id="WP_011283211.1">
    <property type="nucleotide sequence ID" value="NC_007294.1"/>
</dbReference>
<dbReference type="SMR" id="Q4A703"/>
<dbReference type="STRING" id="262723.MS53_0047"/>
<dbReference type="GeneID" id="93529856"/>
<dbReference type="KEGG" id="msy:MS53_0047"/>
<dbReference type="eggNOG" id="COG0480">
    <property type="taxonomic scope" value="Bacteria"/>
</dbReference>
<dbReference type="HOGENOM" id="CLU_002794_4_1_14"/>
<dbReference type="OrthoDB" id="9804431at2"/>
<dbReference type="Proteomes" id="UP000000549">
    <property type="component" value="Chromosome"/>
</dbReference>
<dbReference type="GO" id="GO:0005737">
    <property type="term" value="C:cytoplasm"/>
    <property type="evidence" value="ECO:0007669"/>
    <property type="project" value="UniProtKB-SubCell"/>
</dbReference>
<dbReference type="GO" id="GO:0005525">
    <property type="term" value="F:GTP binding"/>
    <property type="evidence" value="ECO:0007669"/>
    <property type="project" value="UniProtKB-UniRule"/>
</dbReference>
<dbReference type="GO" id="GO:0003924">
    <property type="term" value="F:GTPase activity"/>
    <property type="evidence" value="ECO:0007669"/>
    <property type="project" value="InterPro"/>
</dbReference>
<dbReference type="GO" id="GO:0003746">
    <property type="term" value="F:translation elongation factor activity"/>
    <property type="evidence" value="ECO:0007669"/>
    <property type="project" value="UniProtKB-UniRule"/>
</dbReference>
<dbReference type="GO" id="GO:0032790">
    <property type="term" value="P:ribosome disassembly"/>
    <property type="evidence" value="ECO:0007669"/>
    <property type="project" value="TreeGrafter"/>
</dbReference>
<dbReference type="CDD" id="cd01886">
    <property type="entry name" value="EF-G"/>
    <property type="match status" value="1"/>
</dbReference>
<dbReference type="CDD" id="cd16262">
    <property type="entry name" value="EFG_III"/>
    <property type="match status" value="1"/>
</dbReference>
<dbReference type="CDD" id="cd01434">
    <property type="entry name" value="EFG_mtEFG1_IV"/>
    <property type="match status" value="1"/>
</dbReference>
<dbReference type="CDD" id="cd03713">
    <property type="entry name" value="EFG_mtEFG_C"/>
    <property type="match status" value="1"/>
</dbReference>
<dbReference type="CDD" id="cd04088">
    <property type="entry name" value="EFG_mtEFG_II"/>
    <property type="match status" value="1"/>
</dbReference>
<dbReference type="FunFam" id="2.40.30.10:FF:000006">
    <property type="entry name" value="Elongation factor G"/>
    <property type="match status" value="1"/>
</dbReference>
<dbReference type="FunFam" id="3.30.230.10:FF:000003">
    <property type="entry name" value="Elongation factor G"/>
    <property type="match status" value="1"/>
</dbReference>
<dbReference type="FunFam" id="3.30.70.240:FF:000001">
    <property type="entry name" value="Elongation factor G"/>
    <property type="match status" value="1"/>
</dbReference>
<dbReference type="FunFam" id="3.30.70.870:FF:000001">
    <property type="entry name" value="Elongation factor G"/>
    <property type="match status" value="1"/>
</dbReference>
<dbReference type="FunFam" id="3.40.50.300:FF:000029">
    <property type="entry name" value="Elongation factor G"/>
    <property type="match status" value="1"/>
</dbReference>
<dbReference type="Gene3D" id="3.30.230.10">
    <property type="match status" value="1"/>
</dbReference>
<dbReference type="Gene3D" id="3.30.70.240">
    <property type="match status" value="1"/>
</dbReference>
<dbReference type="Gene3D" id="3.30.70.870">
    <property type="entry name" value="Elongation Factor G (Translational Gtpase), domain 3"/>
    <property type="match status" value="1"/>
</dbReference>
<dbReference type="Gene3D" id="3.40.50.300">
    <property type="entry name" value="P-loop containing nucleotide triphosphate hydrolases"/>
    <property type="match status" value="1"/>
</dbReference>
<dbReference type="Gene3D" id="2.40.30.10">
    <property type="entry name" value="Translation factors"/>
    <property type="match status" value="1"/>
</dbReference>
<dbReference type="HAMAP" id="MF_00054_B">
    <property type="entry name" value="EF_G_EF_2_B"/>
    <property type="match status" value="1"/>
</dbReference>
<dbReference type="InterPro" id="IPR041095">
    <property type="entry name" value="EFG_II"/>
</dbReference>
<dbReference type="InterPro" id="IPR009022">
    <property type="entry name" value="EFG_III"/>
</dbReference>
<dbReference type="InterPro" id="IPR035647">
    <property type="entry name" value="EFG_III/V"/>
</dbReference>
<dbReference type="InterPro" id="IPR047872">
    <property type="entry name" value="EFG_IV"/>
</dbReference>
<dbReference type="InterPro" id="IPR035649">
    <property type="entry name" value="EFG_V"/>
</dbReference>
<dbReference type="InterPro" id="IPR000640">
    <property type="entry name" value="EFG_V-like"/>
</dbReference>
<dbReference type="InterPro" id="IPR004161">
    <property type="entry name" value="EFTu-like_2"/>
</dbReference>
<dbReference type="InterPro" id="IPR031157">
    <property type="entry name" value="G_TR_CS"/>
</dbReference>
<dbReference type="InterPro" id="IPR027417">
    <property type="entry name" value="P-loop_NTPase"/>
</dbReference>
<dbReference type="InterPro" id="IPR020568">
    <property type="entry name" value="Ribosomal_Su5_D2-typ_SF"/>
</dbReference>
<dbReference type="InterPro" id="IPR014721">
    <property type="entry name" value="Ribsml_uS5_D2-typ_fold_subgr"/>
</dbReference>
<dbReference type="InterPro" id="IPR005225">
    <property type="entry name" value="Small_GTP-bd"/>
</dbReference>
<dbReference type="InterPro" id="IPR000795">
    <property type="entry name" value="T_Tr_GTP-bd_dom"/>
</dbReference>
<dbReference type="InterPro" id="IPR009000">
    <property type="entry name" value="Transl_B-barrel_sf"/>
</dbReference>
<dbReference type="InterPro" id="IPR004540">
    <property type="entry name" value="Transl_elong_EFG/EF2"/>
</dbReference>
<dbReference type="InterPro" id="IPR005517">
    <property type="entry name" value="Transl_elong_EFG/EF2_IV"/>
</dbReference>
<dbReference type="NCBIfam" id="TIGR00484">
    <property type="entry name" value="EF-G"/>
    <property type="match status" value="1"/>
</dbReference>
<dbReference type="NCBIfam" id="NF009381">
    <property type="entry name" value="PRK12740.1-5"/>
    <property type="match status" value="1"/>
</dbReference>
<dbReference type="NCBIfam" id="TIGR00231">
    <property type="entry name" value="small_GTP"/>
    <property type="match status" value="1"/>
</dbReference>
<dbReference type="PANTHER" id="PTHR43261:SF1">
    <property type="entry name" value="RIBOSOME-RELEASING FACTOR 2, MITOCHONDRIAL"/>
    <property type="match status" value="1"/>
</dbReference>
<dbReference type="PANTHER" id="PTHR43261">
    <property type="entry name" value="TRANSLATION ELONGATION FACTOR G-RELATED"/>
    <property type="match status" value="1"/>
</dbReference>
<dbReference type="Pfam" id="PF00679">
    <property type="entry name" value="EFG_C"/>
    <property type="match status" value="1"/>
</dbReference>
<dbReference type="Pfam" id="PF14492">
    <property type="entry name" value="EFG_III"/>
    <property type="match status" value="1"/>
</dbReference>
<dbReference type="Pfam" id="PF03764">
    <property type="entry name" value="EFG_IV"/>
    <property type="match status" value="1"/>
</dbReference>
<dbReference type="Pfam" id="PF00009">
    <property type="entry name" value="GTP_EFTU"/>
    <property type="match status" value="1"/>
</dbReference>
<dbReference type="Pfam" id="PF03144">
    <property type="entry name" value="GTP_EFTU_D2"/>
    <property type="match status" value="1"/>
</dbReference>
<dbReference type="PRINTS" id="PR00315">
    <property type="entry name" value="ELONGATNFCT"/>
</dbReference>
<dbReference type="SMART" id="SM00838">
    <property type="entry name" value="EFG_C"/>
    <property type="match status" value="1"/>
</dbReference>
<dbReference type="SMART" id="SM00889">
    <property type="entry name" value="EFG_IV"/>
    <property type="match status" value="1"/>
</dbReference>
<dbReference type="SUPFAM" id="SSF54980">
    <property type="entry name" value="EF-G C-terminal domain-like"/>
    <property type="match status" value="2"/>
</dbReference>
<dbReference type="SUPFAM" id="SSF52540">
    <property type="entry name" value="P-loop containing nucleoside triphosphate hydrolases"/>
    <property type="match status" value="1"/>
</dbReference>
<dbReference type="SUPFAM" id="SSF54211">
    <property type="entry name" value="Ribosomal protein S5 domain 2-like"/>
    <property type="match status" value="1"/>
</dbReference>
<dbReference type="SUPFAM" id="SSF50447">
    <property type="entry name" value="Translation proteins"/>
    <property type="match status" value="1"/>
</dbReference>
<dbReference type="PROSITE" id="PS00301">
    <property type="entry name" value="G_TR_1"/>
    <property type="match status" value="1"/>
</dbReference>
<dbReference type="PROSITE" id="PS51722">
    <property type="entry name" value="G_TR_2"/>
    <property type="match status" value="1"/>
</dbReference>
<feature type="chain" id="PRO_0000225219" description="Elongation factor G">
    <location>
        <begin position="1"/>
        <end position="696"/>
    </location>
</feature>
<feature type="domain" description="tr-type G">
    <location>
        <begin position="8"/>
        <end position="282"/>
    </location>
</feature>
<feature type="binding site" evidence="1">
    <location>
        <begin position="17"/>
        <end position="24"/>
    </location>
    <ligand>
        <name>GTP</name>
        <dbReference type="ChEBI" id="CHEBI:37565"/>
    </ligand>
</feature>
<feature type="binding site" evidence="1">
    <location>
        <begin position="81"/>
        <end position="85"/>
    </location>
    <ligand>
        <name>GTP</name>
        <dbReference type="ChEBI" id="CHEBI:37565"/>
    </ligand>
</feature>
<feature type="binding site" evidence="1">
    <location>
        <begin position="135"/>
        <end position="138"/>
    </location>
    <ligand>
        <name>GTP</name>
        <dbReference type="ChEBI" id="CHEBI:37565"/>
    </ligand>
</feature>
<proteinExistence type="inferred from homology"/>
<keyword id="KW-0963">Cytoplasm</keyword>
<keyword id="KW-0251">Elongation factor</keyword>
<keyword id="KW-0342">GTP-binding</keyword>
<keyword id="KW-0547">Nucleotide-binding</keyword>
<keyword id="KW-0648">Protein biosynthesis</keyword>
<keyword id="KW-1185">Reference proteome</keyword>
<accession>Q4A703</accession>
<protein>
    <recommendedName>
        <fullName evidence="1">Elongation factor G</fullName>
        <shortName evidence="1">EF-G</shortName>
    </recommendedName>
</protein>
<organism>
    <name type="scientific">Mycoplasmopsis synoviae (strain 53)</name>
    <name type="common">Mycoplasma synoviae</name>
    <dbReference type="NCBI Taxonomy" id="262723"/>
    <lineage>
        <taxon>Bacteria</taxon>
        <taxon>Bacillati</taxon>
        <taxon>Mycoplasmatota</taxon>
        <taxon>Mycoplasmoidales</taxon>
        <taxon>Metamycoplasmataceae</taxon>
        <taxon>Mycoplasmopsis</taxon>
    </lineage>
</organism>
<reference key="1">
    <citation type="journal article" date="2005" name="J. Bacteriol.">
        <title>Swine and poultry pathogens: the complete genome sequences of two strains of Mycoplasma hyopneumoniae and a strain of Mycoplasma synoviae.</title>
        <authorList>
            <person name="Vasconcelos A.T.R."/>
            <person name="Ferreira H.B."/>
            <person name="Bizarro C.V."/>
            <person name="Bonatto S.L."/>
            <person name="Carvalho M.O."/>
            <person name="Pinto P.M."/>
            <person name="Almeida D.F."/>
            <person name="Almeida L.G.P."/>
            <person name="Almeida R."/>
            <person name="Alves-Junior L."/>
            <person name="Assuncao E.N."/>
            <person name="Azevedo V.A.C."/>
            <person name="Bogo M.R."/>
            <person name="Brigido M.M."/>
            <person name="Brocchi M."/>
            <person name="Burity H.A."/>
            <person name="Camargo A.A."/>
            <person name="Camargo S.S."/>
            <person name="Carepo M.S."/>
            <person name="Carraro D.M."/>
            <person name="de Mattos Cascardo J.C."/>
            <person name="Castro L.A."/>
            <person name="Cavalcanti G."/>
            <person name="Chemale G."/>
            <person name="Collevatti R.G."/>
            <person name="Cunha C.W."/>
            <person name="Dallagiovanna B."/>
            <person name="Dambros B.P."/>
            <person name="Dellagostin O.A."/>
            <person name="Falcao C."/>
            <person name="Fantinatti-Garboggini F."/>
            <person name="Felipe M.S.S."/>
            <person name="Fiorentin L."/>
            <person name="Franco G.R."/>
            <person name="Freitas N.S.A."/>
            <person name="Frias D."/>
            <person name="Grangeiro T.B."/>
            <person name="Grisard E.C."/>
            <person name="Guimaraes C.T."/>
            <person name="Hungria M."/>
            <person name="Jardim S.N."/>
            <person name="Krieger M.A."/>
            <person name="Laurino J.P."/>
            <person name="Lima L.F.A."/>
            <person name="Lopes M.I."/>
            <person name="Loreto E.L.S."/>
            <person name="Madeira H.M.F."/>
            <person name="Manfio G.P."/>
            <person name="Maranhao A.Q."/>
            <person name="Martinkovics C.T."/>
            <person name="Medeiros S.R.B."/>
            <person name="Moreira M.A.M."/>
            <person name="Neiva M."/>
            <person name="Ramalho-Neto C.E."/>
            <person name="Nicolas M.F."/>
            <person name="Oliveira S.C."/>
            <person name="Paixao R.F.C."/>
            <person name="Pedrosa F.O."/>
            <person name="Pena S.D.J."/>
            <person name="Pereira M."/>
            <person name="Pereira-Ferrari L."/>
            <person name="Piffer I."/>
            <person name="Pinto L.S."/>
            <person name="Potrich D.P."/>
            <person name="Salim A.C.M."/>
            <person name="Santos F.R."/>
            <person name="Schmitt R."/>
            <person name="Schneider M.P.C."/>
            <person name="Schrank A."/>
            <person name="Schrank I.S."/>
            <person name="Schuck A.F."/>
            <person name="Seuanez H.N."/>
            <person name="Silva D.W."/>
            <person name="Silva R."/>
            <person name="Silva S.C."/>
            <person name="Soares C.M.A."/>
            <person name="Souza K.R.L."/>
            <person name="Souza R.C."/>
            <person name="Staats C.C."/>
            <person name="Steffens M.B.R."/>
            <person name="Teixeira S.M.R."/>
            <person name="Urmenyi T.P."/>
            <person name="Vainstein M.H."/>
            <person name="Zuccherato L.W."/>
            <person name="Simpson A.J.G."/>
            <person name="Zaha A."/>
        </authorList>
    </citation>
    <scope>NUCLEOTIDE SEQUENCE [LARGE SCALE GENOMIC DNA]</scope>
    <source>
        <strain>53</strain>
    </source>
</reference>
<sequence>MARDYDLKDYRNIGIMAHIDAGKTTTTERILYHTGKIHKIGETHDGVSQMDWMEQEKERGITITSAATTAYWKNKRINIIDTPGHVDFTVEVERSLRVLDGAVAVLDAQSGVEPQTETVWRQATNYKVPRIVYVNKMDKAGADFEAAVASVKSRLGGNAVAIQWPIGSESNFNGIIDLVTMTATTYNGESAEEEFPMEIPTDLLDVAKAKRQELLEAAANFDEEVMMMVLEGADVDIDTFKNTIRKATLTSEFFPVVCGTSFKNKGVKKMIDAVVDYLPSPLDIPPIKAYLNDQETDVVATDDGEFAALAFKVMTDPFVGSLTFFRVYRGVLEKGSYVYNSTKEQKERIGRILQMHANNRVEIDECRAGDIAAAVGLKFTTTGDTLVGEKSPKVVLEKMVFPEPVISQALEPESKAANEKLSLGLQKLSAEDPTFRTYTDEETGQTIISGMGELHLDIIVDRLKREFGVKVKVGAPQVSYRETITKSAEVEGKHIKQSGGKGQYGHVWLKFEPNHDQGFEFIDKIVGGKIPKEYIKPIQKGLEEKMAVGILAGYPMIDVKATLFDGSYHDVDSSELAYKIAASKALTKAKDLIGTVLLEPIMDVSVVVPSDHMGDVIGDLSRRRGLISDQEQRNDGAVIVRAKVPLSEMFGYSTELRSMTSGRGTYQMQFDHYEKCPKNISDEIIKKRNIQNKDEE</sequence>
<evidence type="ECO:0000255" key="1">
    <source>
        <dbReference type="HAMAP-Rule" id="MF_00054"/>
    </source>
</evidence>